<reference key="1">
    <citation type="journal article" date="2006" name="Genes Genet. Syst.">
        <title>Complete nucleotide sequence of the cotton (Gossypium barbadense L.) chloroplast genome with a comparative analysis of sequences among 9 dicot plants.</title>
        <authorList>
            <person name="Ibrahim R.I.H."/>
            <person name="Azuma J."/>
            <person name="Sakamoto M."/>
        </authorList>
    </citation>
    <scope>NUCLEOTIDE SEQUENCE [LARGE SCALE GENOMIC DNA]</scope>
</reference>
<name>PSBI_GOSBA</name>
<comment type="function">
    <text evidence="1">One of the components of the core complex of photosystem II (PSII), required for its stability and/or assembly. PSII is a light-driven water:plastoquinone oxidoreductase that uses light energy to abstract electrons from H(2)O, generating O(2) and a proton gradient subsequently used for ATP formation. It consists of a core antenna complex that captures photons, and an electron transfer chain that converts photonic excitation into a charge separation.</text>
</comment>
<comment type="subunit">
    <text evidence="1">PSII is composed of 1 copy each of membrane proteins PsbA, PsbB, PsbC, PsbD, PsbE, PsbF, PsbH, PsbI, PsbJ, PsbK, PsbL, PsbM, PsbT, PsbX, PsbY, PsbZ, Psb30/Ycf12, at least 3 peripheral proteins of the oxygen-evolving complex and a large number of cofactors. It forms dimeric complexes.</text>
</comment>
<comment type="subcellular location">
    <subcellularLocation>
        <location evidence="1">Plastid</location>
        <location evidence="1">Chloroplast thylakoid membrane</location>
        <topology evidence="1">Single-pass membrane protein</topology>
    </subcellularLocation>
</comment>
<comment type="similarity">
    <text evidence="1">Belongs to the PsbI family.</text>
</comment>
<organism>
    <name type="scientific">Gossypium barbadense</name>
    <name type="common">Sea Island cotton</name>
    <name type="synonym">Hibiscus barbadensis</name>
    <dbReference type="NCBI Taxonomy" id="3634"/>
    <lineage>
        <taxon>Eukaryota</taxon>
        <taxon>Viridiplantae</taxon>
        <taxon>Streptophyta</taxon>
        <taxon>Embryophyta</taxon>
        <taxon>Tracheophyta</taxon>
        <taxon>Spermatophyta</taxon>
        <taxon>Magnoliopsida</taxon>
        <taxon>eudicotyledons</taxon>
        <taxon>Gunneridae</taxon>
        <taxon>Pentapetalae</taxon>
        <taxon>rosids</taxon>
        <taxon>malvids</taxon>
        <taxon>Malvales</taxon>
        <taxon>Malvaceae</taxon>
        <taxon>Malvoideae</taxon>
        <taxon>Gossypium</taxon>
    </lineage>
</organism>
<feature type="chain" id="PRO_0000275793" description="Photosystem II reaction center protein I">
    <location>
        <begin position="1"/>
        <end position="36"/>
    </location>
</feature>
<feature type="transmembrane region" description="Helical" evidence="1">
    <location>
        <begin position="4"/>
        <end position="24"/>
    </location>
</feature>
<geneLocation type="chloroplast"/>
<keyword id="KW-0150">Chloroplast</keyword>
<keyword id="KW-0472">Membrane</keyword>
<keyword id="KW-0602">Photosynthesis</keyword>
<keyword id="KW-0604">Photosystem II</keyword>
<keyword id="KW-0934">Plastid</keyword>
<keyword id="KW-0674">Reaction center</keyword>
<keyword id="KW-0793">Thylakoid</keyword>
<keyword id="KW-0812">Transmembrane</keyword>
<keyword id="KW-1133">Transmembrane helix</keyword>
<proteinExistence type="inferred from homology"/>
<dbReference type="EMBL" id="AP009123">
    <property type="protein sequence ID" value="BAF41231.1"/>
    <property type="molecule type" value="Genomic_DNA"/>
</dbReference>
<dbReference type="RefSeq" id="YP_913171.1">
    <property type="nucleotide sequence ID" value="NC_008641.1"/>
</dbReference>
<dbReference type="SMR" id="A0ZZ19"/>
<dbReference type="GeneID" id="4575223"/>
<dbReference type="OrthoDB" id="564007at2759"/>
<dbReference type="GO" id="GO:0009535">
    <property type="term" value="C:chloroplast thylakoid membrane"/>
    <property type="evidence" value="ECO:0007669"/>
    <property type="project" value="UniProtKB-SubCell"/>
</dbReference>
<dbReference type="GO" id="GO:0009539">
    <property type="term" value="C:photosystem II reaction center"/>
    <property type="evidence" value="ECO:0007669"/>
    <property type="project" value="InterPro"/>
</dbReference>
<dbReference type="GO" id="GO:0015979">
    <property type="term" value="P:photosynthesis"/>
    <property type="evidence" value="ECO:0007669"/>
    <property type="project" value="UniProtKB-UniRule"/>
</dbReference>
<dbReference type="HAMAP" id="MF_01316">
    <property type="entry name" value="PSII_PsbI"/>
    <property type="match status" value="1"/>
</dbReference>
<dbReference type="InterPro" id="IPR003686">
    <property type="entry name" value="PSII_PsbI"/>
</dbReference>
<dbReference type="InterPro" id="IPR037271">
    <property type="entry name" value="PSII_PsbI_sf"/>
</dbReference>
<dbReference type="NCBIfam" id="NF002735">
    <property type="entry name" value="PRK02655.1"/>
    <property type="match status" value="1"/>
</dbReference>
<dbReference type="PANTHER" id="PTHR35772">
    <property type="entry name" value="PHOTOSYSTEM II REACTION CENTER PROTEIN I"/>
    <property type="match status" value="1"/>
</dbReference>
<dbReference type="PANTHER" id="PTHR35772:SF1">
    <property type="entry name" value="PHOTOSYSTEM II REACTION CENTER PROTEIN I"/>
    <property type="match status" value="1"/>
</dbReference>
<dbReference type="Pfam" id="PF02532">
    <property type="entry name" value="PsbI"/>
    <property type="match status" value="1"/>
</dbReference>
<dbReference type="SUPFAM" id="SSF161041">
    <property type="entry name" value="Photosystem II reaction center protein I, PsbI"/>
    <property type="match status" value="1"/>
</dbReference>
<evidence type="ECO:0000255" key="1">
    <source>
        <dbReference type="HAMAP-Rule" id="MF_01316"/>
    </source>
</evidence>
<protein>
    <recommendedName>
        <fullName evidence="1">Photosystem II reaction center protein I</fullName>
        <shortName evidence="1">PSII-I</shortName>
    </recommendedName>
    <alternativeName>
        <fullName evidence="1">PSII 4.8 kDa protein</fullName>
    </alternativeName>
</protein>
<accession>A0ZZ19</accession>
<sequence>MLTLKLFVYTVVIFFVSLFIFGFLSNDPGRNPGREE</sequence>
<gene>
    <name evidence="1" type="primary">psbI</name>
</gene>